<accession>Q97WW0</accession>
<dbReference type="EC" id="3.1.-.-"/>
<dbReference type="EMBL" id="AE006641">
    <property type="protein sequence ID" value="AAK42190.1"/>
    <property type="molecule type" value="Genomic_DNA"/>
</dbReference>
<dbReference type="PIR" id="G90366">
    <property type="entry name" value="G90366"/>
</dbReference>
<dbReference type="RefSeq" id="WP_010923717.1">
    <property type="nucleotide sequence ID" value="NC_002754.1"/>
</dbReference>
<dbReference type="SMR" id="Q97WW0"/>
<dbReference type="STRING" id="273057.SSO2001"/>
<dbReference type="PaxDb" id="273057-SSO2001"/>
<dbReference type="DNASU" id="1453517"/>
<dbReference type="EnsemblBacteria" id="AAK42190">
    <property type="protein sequence ID" value="AAK42190"/>
    <property type="gene ID" value="SSO2001"/>
</dbReference>
<dbReference type="GeneID" id="1453517"/>
<dbReference type="KEGG" id="sso:SSO2001"/>
<dbReference type="PATRIC" id="fig|273057.12.peg.2077"/>
<dbReference type="eggNOG" id="arCOG01442">
    <property type="taxonomic scope" value="Archaea"/>
</dbReference>
<dbReference type="HOGENOM" id="CLU_1163752_0_0_2"/>
<dbReference type="InParanoid" id="Q97WW0"/>
<dbReference type="BRENDA" id="3.1.99.B5">
    <property type="organism ID" value="6163"/>
</dbReference>
<dbReference type="Proteomes" id="UP000001974">
    <property type="component" value="Chromosome"/>
</dbReference>
<dbReference type="GO" id="GO:0004519">
    <property type="term" value="F:endonuclease activity"/>
    <property type="evidence" value="ECO:0007669"/>
    <property type="project" value="UniProtKB-KW"/>
</dbReference>
<dbReference type="GO" id="GO:0046872">
    <property type="term" value="F:metal ion binding"/>
    <property type="evidence" value="ECO:0007669"/>
    <property type="project" value="UniProtKB-KW"/>
</dbReference>
<dbReference type="GO" id="GO:0051607">
    <property type="term" value="P:defense response to virus"/>
    <property type="evidence" value="ECO:0007669"/>
    <property type="project" value="UniProtKB-KW"/>
</dbReference>
<dbReference type="CDD" id="cd10013">
    <property type="entry name" value="Cas3''_I"/>
    <property type="match status" value="1"/>
</dbReference>
<dbReference type="Gene3D" id="1.10.3210.30">
    <property type="match status" value="1"/>
</dbReference>
<dbReference type="InterPro" id="IPR006483">
    <property type="entry name" value="CRISPR-assoc_Cas3_HD"/>
</dbReference>
<dbReference type="InterPro" id="IPR038257">
    <property type="entry name" value="CRISPR-assoc_Cas3_HD_sf"/>
</dbReference>
<dbReference type="NCBIfam" id="TIGR01596">
    <property type="entry name" value="cas3_HD"/>
    <property type="match status" value="1"/>
</dbReference>
<dbReference type="PROSITE" id="PS51643">
    <property type="entry name" value="HD_CAS3"/>
    <property type="match status" value="1"/>
</dbReference>
<sequence length="239" mass="27515">MIKPCAYEKQGLIDHAIGSYRVLDGKISESYYKIISRRLERYGIVLDLNGVKEMVKDVVVLHDMGKAGEYYQNQFDDNCNPLKSNFSFIYHELGSALFFYYDYEPIDVEKAEEVKSLLTLAVLNHLNAIRVISDYLVNKFPDNFDERMIKLNKYGSIMLQNLRGVISKSLKVRDYTFDDYHDMLYAFSKKSDKYLKLYNLFLAPIMLGDNLDSSLVRNNGSKTGFVRILEGELNGGSTL</sequence>
<protein>
    <recommendedName>
        <fullName>CRISPR-associated endonuclease Cas3-HD</fullName>
        <ecNumber>3.1.-.-</ecNumber>
    </recommendedName>
</protein>
<evidence type="ECO:0000250" key="1"/>
<evidence type="ECO:0000255" key="2"/>
<evidence type="ECO:0000255" key="3">
    <source>
        <dbReference type="PROSITE-ProRule" id="PRU00974"/>
    </source>
</evidence>
<evidence type="ECO:0000269" key="4">
    <source>
    </source>
</evidence>
<evidence type="ECO:0000305" key="5"/>
<feature type="chain" id="PRO_0000417608" description="CRISPR-associated endonuclease Cas3-HD">
    <location>
        <begin position="1"/>
        <end position="239"/>
    </location>
</feature>
<feature type="domain" description="HD Cas3-type" evidence="3">
    <location>
        <begin position="5"/>
        <end position="195"/>
    </location>
</feature>
<feature type="binding site" evidence="1">
    <location>
        <position position="63"/>
    </location>
    <ligand>
        <name>Mg(2+)</name>
        <dbReference type="ChEBI" id="CHEBI:18420"/>
    </ligand>
</feature>
<feature type="binding site" evidence="2">
    <location>
        <position position="92"/>
    </location>
    <ligand>
        <name>Mg(2+)</name>
        <dbReference type="ChEBI" id="CHEBI:18420"/>
    </ligand>
</feature>
<feature type="mutagenesis site" description="Significant loss of endonuclease activity. Complete loss of activity; when associated with A-92." evidence="4">
    <original>D</original>
    <variation>A</variation>
    <location>
        <position position="63"/>
    </location>
</feature>
<feature type="mutagenesis site" description="Some loss of endonuclease activity. Complete loss of activity; when associated with A-63." evidence="4">
    <original>E</original>
    <variation>A</variation>
    <location>
        <position position="92"/>
    </location>
</feature>
<feature type="mutagenesis site" description="No effect." evidence="4">
    <original>S</original>
    <variation>A</variation>
    <location>
        <position position="95"/>
    </location>
</feature>
<proteinExistence type="evidence at protein level"/>
<name>CS3HD_SACS2</name>
<keyword id="KW-0051">Antiviral defense</keyword>
<keyword id="KW-0255">Endonuclease</keyword>
<keyword id="KW-0378">Hydrolase</keyword>
<keyword id="KW-0460">Magnesium</keyword>
<keyword id="KW-0479">Metal-binding</keyword>
<keyword id="KW-0540">Nuclease</keyword>
<keyword id="KW-1185">Reference proteome</keyword>
<gene>
    <name type="primary">cas3</name>
    <name type="synonym">cas3''</name>
    <name type="ordered locus">SSO2001</name>
</gene>
<organism>
    <name type="scientific">Saccharolobus solfataricus (strain ATCC 35092 / DSM 1617 / JCM 11322 / P2)</name>
    <name type="common">Sulfolobus solfataricus</name>
    <dbReference type="NCBI Taxonomy" id="273057"/>
    <lineage>
        <taxon>Archaea</taxon>
        <taxon>Thermoproteota</taxon>
        <taxon>Thermoprotei</taxon>
        <taxon>Sulfolobales</taxon>
        <taxon>Sulfolobaceae</taxon>
        <taxon>Saccharolobus</taxon>
    </lineage>
</organism>
<reference key="1">
    <citation type="journal article" date="2001" name="Proc. Natl. Acad. Sci. U.S.A.">
        <title>The complete genome of the crenarchaeon Sulfolobus solfataricus P2.</title>
        <authorList>
            <person name="She Q."/>
            <person name="Singh R.K."/>
            <person name="Confalonieri F."/>
            <person name="Zivanovic Y."/>
            <person name="Allard G."/>
            <person name="Awayez M.J."/>
            <person name="Chan-Weiher C.C.-Y."/>
            <person name="Clausen I.G."/>
            <person name="Curtis B.A."/>
            <person name="De Moors A."/>
            <person name="Erauso G."/>
            <person name="Fletcher C."/>
            <person name="Gordon P.M.K."/>
            <person name="Heikamp-de Jong I."/>
            <person name="Jeffries A.C."/>
            <person name="Kozera C.J."/>
            <person name="Medina N."/>
            <person name="Peng X."/>
            <person name="Thi-Ngoc H.P."/>
            <person name="Redder P."/>
            <person name="Schenk M.E."/>
            <person name="Theriault C."/>
            <person name="Tolstrup N."/>
            <person name="Charlebois R.L."/>
            <person name="Doolittle W.F."/>
            <person name="Duguet M."/>
            <person name="Gaasterland T."/>
            <person name="Garrett R.A."/>
            <person name="Ragan M.A."/>
            <person name="Sensen C.W."/>
            <person name="Van der Oost J."/>
        </authorList>
    </citation>
    <scope>NUCLEOTIDE SEQUENCE [LARGE SCALE GENOMIC DNA]</scope>
    <source>
        <strain>ATCC 35092 / DSM 1617 / JCM 11322 / P2</strain>
    </source>
</reference>
<reference key="2">
    <citation type="journal article" date="2009" name="FEBS Lett.">
        <title>Characterization of the endonuclease SSO2001 from Sulfolobus solfataricus P2.</title>
        <authorList>
            <person name="Han D."/>
            <person name="Krauss G."/>
        </authorList>
    </citation>
    <scope>FUNCTION AS AN ENDONUCLEASE</scope>
    <scope>BIOPHYSICOCHEMICAL PROPERTIES</scope>
    <scope>COFACTOR</scope>
    <scope>MUTAGENESIS OF ASP-63; GLU-92 AND SER-95</scope>
    <source>
        <strain>ATCC 35092 / DSM 1617 / JCM 11322 / P2</strain>
    </source>
</reference>
<comment type="function">
    <text evidence="4">CRISPR (clustered regularly interspaced short palindromic repeat), is an adaptive immune system that provides protection against mobile genetic elements (viruses, transposable elements and conjugative plasmids). CRISPR clusters contain sequences complementary to antecedent mobile elements and target invading nucleic acids. CRISPR clusters are transcribed and processed into CRISPR RNA (crRNA). Cas3 plus Cascade participate in CRISPR interference, the third stage of CRISPR immunity. Acts as a dsDNA and dsRNA endonuclease (in a fusion with Alicyclus caldarius esterase to increase solubility).</text>
</comment>
<comment type="cofactor">
    <cofactor evidence="4">
        <name>Mg(2+)</name>
        <dbReference type="ChEBI" id="CHEBI:18420"/>
    </cofactor>
</comment>
<comment type="biophysicochemical properties">
    <phDependence>
        <text evidence="4">Optimum pH is 3 and 7-8. Expressed as a fusion protein to increase stability.</text>
    </phDependence>
    <temperatureDependence>
        <text evidence="4">Optimum temperature is 50 degrees Celsius. Expressed as a fusion protein to increase stability.</text>
    </temperatureDependence>
</comment>
<comment type="domain">
    <text>Proteins of this family have an N-terminal nuclease domain and a C-terminal helicase/ATPase domain. In some CRISPR/Cas systems the domains are swapped, in others they are encoded separately.</text>
</comment>
<comment type="similarity">
    <text evidence="5">Belongs to the CRISPR-associated nuclease Cas3-HD family.</text>
</comment>